<comment type="function">
    <text evidence="1">Catalyzes the transfer of an acyl group from acyl-phosphate (acyl-PO(4)) to glycerol-3-phosphate (G3P) to form lysophosphatidic acid (LPA). This enzyme utilizes acyl-phosphate as fatty acyl donor, but not acyl-CoA or acyl-ACP.</text>
</comment>
<comment type="catalytic activity">
    <reaction evidence="1">
        <text>an acyl phosphate + sn-glycerol 3-phosphate = a 1-acyl-sn-glycero-3-phosphate + phosphate</text>
        <dbReference type="Rhea" id="RHEA:34075"/>
        <dbReference type="ChEBI" id="CHEBI:43474"/>
        <dbReference type="ChEBI" id="CHEBI:57597"/>
        <dbReference type="ChEBI" id="CHEBI:57970"/>
        <dbReference type="ChEBI" id="CHEBI:59918"/>
        <dbReference type="EC" id="2.3.1.275"/>
    </reaction>
</comment>
<comment type="pathway">
    <text evidence="1">Lipid metabolism; phospholipid metabolism.</text>
</comment>
<comment type="subunit">
    <text evidence="1">Probably interacts with PlsX.</text>
</comment>
<comment type="subcellular location">
    <subcellularLocation>
        <location evidence="1">Cell inner membrane</location>
        <topology evidence="1">Multi-pass membrane protein</topology>
    </subcellularLocation>
</comment>
<comment type="similarity">
    <text evidence="1">Belongs to the PlsY family.</text>
</comment>
<gene>
    <name evidence="1" type="primary">plsY</name>
    <name type="ordered locus">FN0537</name>
</gene>
<reference key="1">
    <citation type="journal article" date="2002" name="J. Bacteriol.">
        <title>Genome sequence and analysis of the oral bacterium Fusobacterium nucleatum strain ATCC 25586.</title>
        <authorList>
            <person name="Kapatral V."/>
            <person name="Anderson I."/>
            <person name="Ivanova N."/>
            <person name="Reznik G."/>
            <person name="Los T."/>
            <person name="Lykidis A."/>
            <person name="Bhattacharyya A."/>
            <person name="Bartman A."/>
            <person name="Gardner W."/>
            <person name="Grechkin G."/>
            <person name="Zhu L."/>
            <person name="Vasieva O."/>
            <person name="Chu L."/>
            <person name="Kogan Y."/>
            <person name="Chaga O."/>
            <person name="Goltsman E."/>
            <person name="Bernal A."/>
            <person name="Larsen N."/>
            <person name="D'Souza M."/>
            <person name="Walunas T."/>
            <person name="Pusch G."/>
            <person name="Haselkorn R."/>
            <person name="Fonstein M."/>
            <person name="Kyrpides N.C."/>
            <person name="Overbeek R."/>
        </authorList>
    </citation>
    <scope>NUCLEOTIDE SEQUENCE [LARGE SCALE GENOMIC DNA]</scope>
    <source>
        <strain>ATCC 25586 / DSM 15643 / BCRC 10681 / CIP 101130 / JCM 8532 / KCTC 2640 / LMG 13131 / VPI 4355</strain>
    </source>
</reference>
<accession>Q8RFY9</accession>
<name>PLSY_FUSNN</name>
<evidence type="ECO:0000255" key="1">
    <source>
        <dbReference type="HAMAP-Rule" id="MF_01043"/>
    </source>
</evidence>
<feature type="chain" id="PRO_0000188372" description="Glycerol-3-phosphate acyltransferase">
    <location>
        <begin position="1"/>
        <end position="194"/>
    </location>
</feature>
<feature type="transmembrane region" description="Helical" evidence="1">
    <location>
        <begin position="2"/>
        <end position="22"/>
    </location>
</feature>
<feature type="transmembrane region" description="Helical" evidence="1">
    <location>
        <begin position="52"/>
        <end position="72"/>
    </location>
</feature>
<feature type="transmembrane region" description="Helical" evidence="1">
    <location>
        <begin position="80"/>
        <end position="100"/>
    </location>
</feature>
<feature type="transmembrane region" description="Helical" evidence="1">
    <location>
        <begin position="112"/>
        <end position="132"/>
    </location>
</feature>
<feature type="transmembrane region" description="Helical" evidence="1">
    <location>
        <begin position="137"/>
        <end position="157"/>
    </location>
</feature>
<feature type="transmembrane region" description="Helical" evidence="1">
    <location>
        <begin position="161"/>
        <end position="181"/>
    </location>
</feature>
<proteinExistence type="inferred from homology"/>
<sequence length="194" mass="21344">MAFFCFIVLTYFIGAIPSGVWIGKAFKGVDVRDYGSKNSGATNSYRVLGAKLGVAVLIMDVLKGFIPLYIASKFNLVYNDLVILGLVAILAHTFSCFISFKGGKGVATSLGVFLFLIPVITLILLAIFILVAYFTKYVSLASITAAFLLPIFTFFTHKDSYLFALSVIIAVFVIYRHKTNISRLLSGTENKFKF</sequence>
<protein>
    <recommendedName>
        <fullName evidence="1">Glycerol-3-phosphate acyltransferase</fullName>
    </recommendedName>
    <alternativeName>
        <fullName evidence="1">Acyl-PO4 G3P acyltransferase</fullName>
    </alternativeName>
    <alternativeName>
        <fullName evidence="1">Acyl-phosphate--glycerol-3-phosphate acyltransferase</fullName>
    </alternativeName>
    <alternativeName>
        <fullName evidence="1">G3P acyltransferase</fullName>
        <shortName evidence="1">GPAT</shortName>
        <ecNumber evidence="1">2.3.1.275</ecNumber>
    </alternativeName>
    <alternativeName>
        <fullName evidence="1">Lysophosphatidic acid synthase</fullName>
        <shortName evidence="1">LPA synthase</shortName>
    </alternativeName>
</protein>
<dbReference type="EC" id="2.3.1.275" evidence="1"/>
<dbReference type="EMBL" id="AE009951">
    <property type="protein sequence ID" value="AAL94733.1"/>
    <property type="molecule type" value="Genomic_DNA"/>
</dbReference>
<dbReference type="RefSeq" id="NP_603434.1">
    <property type="nucleotide sequence ID" value="NC_003454.1"/>
</dbReference>
<dbReference type="RefSeq" id="WP_011016461.1">
    <property type="nucleotide sequence ID" value="NZ_CP028101.1"/>
</dbReference>
<dbReference type="SMR" id="Q8RFY9"/>
<dbReference type="FunCoup" id="Q8RFY9">
    <property type="interactions" value="182"/>
</dbReference>
<dbReference type="STRING" id="190304.FN0537"/>
<dbReference type="PaxDb" id="190304-FN0537"/>
<dbReference type="EnsemblBacteria" id="AAL94733">
    <property type="protein sequence ID" value="AAL94733"/>
    <property type="gene ID" value="FN0537"/>
</dbReference>
<dbReference type="GeneID" id="79783539"/>
<dbReference type="KEGG" id="fnu:FN0537"/>
<dbReference type="PATRIC" id="fig|190304.8.peg.1104"/>
<dbReference type="eggNOG" id="COG0344">
    <property type="taxonomic scope" value="Bacteria"/>
</dbReference>
<dbReference type="HOGENOM" id="CLU_081254_7_1_0"/>
<dbReference type="InParanoid" id="Q8RFY9"/>
<dbReference type="BioCyc" id="FNUC190304:G1FZS-1126-MONOMER"/>
<dbReference type="UniPathway" id="UPA00085"/>
<dbReference type="Proteomes" id="UP000002521">
    <property type="component" value="Chromosome"/>
</dbReference>
<dbReference type="GO" id="GO:0005886">
    <property type="term" value="C:plasma membrane"/>
    <property type="evidence" value="ECO:0000318"/>
    <property type="project" value="GO_Central"/>
</dbReference>
<dbReference type="GO" id="GO:0043772">
    <property type="term" value="F:acyl-phosphate glycerol-3-phosphate acyltransferase activity"/>
    <property type="evidence" value="ECO:0007669"/>
    <property type="project" value="UniProtKB-UniRule"/>
</dbReference>
<dbReference type="GO" id="GO:0008654">
    <property type="term" value="P:phospholipid biosynthetic process"/>
    <property type="evidence" value="ECO:0007669"/>
    <property type="project" value="UniProtKB-UniRule"/>
</dbReference>
<dbReference type="HAMAP" id="MF_01043">
    <property type="entry name" value="PlsY"/>
    <property type="match status" value="1"/>
</dbReference>
<dbReference type="InterPro" id="IPR003811">
    <property type="entry name" value="G3P_acylTferase_PlsY"/>
</dbReference>
<dbReference type="NCBIfam" id="TIGR00023">
    <property type="entry name" value="glycerol-3-phosphate 1-O-acyltransferase PlsY"/>
    <property type="match status" value="1"/>
</dbReference>
<dbReference type="PANTHER" id="PTHR30309:SF0">
    <property type="entry name" value="GLYCEROL-3-PHOSPHATE ACYLTRANSFERASE-RELATED"/>
    <property type="match status" value="1"/>
</dbReference>
<dbReference type="PANTHER" id="PTHR30309">
    <property type="entry name" value="INNER MEMBRANE PROTEIN YGIH"/>
    <property type="match status" value="1"/>
</dbReference>
<dbReference type="Pfam" id="PF02660">
    <property type="entry name" value="G3P_acyltransf"/>
    <property type="match status" value="1"/>
</dbReference>
<dbReference type="SMART" id="SM01207">
    <property type="entry name" value="G3P_acyltransf"/>
    <property type="match status" value="1"/>
</dbReference>
<organism>
    <name type="scientific">Fusobacterium nucleatum subsp. nucleatum (strain ATCC 25586 / DSM 15643 / BCRC 10681 / CIP 101130 / JCM 8532 / KCTC 2640 / LMG 13131 / VPI 4355)</name>
    <dbReference type="NCBI Taxonomy" id="190304"/>
    <lineage>
        <taxon>Bacteria</taxon>
        <taxon>Fusobacteriati</taxon>
        <taxon>Fusobacteriota</taxon>
        <taxon>Fusobacteriia</taxon>
        <taxon>Fusobacteriales</taxon>
        <taxon>Fusobacteriaceae</taxon>
        <taxon>Fusobacterium</taxon>
    </lineage>
</organism>
<keyword id="KW-0997">Cell inner membrane</keyword>
<keyword id="KW-1003">Cell membrane</keyword>
<keyword id="KW-0444">Lipid biosynthesis</keyword>
<keyword id="KW-0443">Lipid metabolism</keyword>
<keyword id="KW-0472">Membrane</keyword>
<keyword id="KW-0594">Phospholipid biosynthesis</keyword>
<keyword id="KW-1208">Phospholipid metabolism</keyword>
<keyword id="KW-1185">Reference proteome</keyword>
<keyword id="KW-0808">Transferase</keyword>
<keyword id="KW-0812">Transmembrane</keyword>
<keyword id="KW-1133">Transmembrane helix</keyword>